<dbReference type="Proteomes" id="UP000694918">
    <property type="component" value="Unplaced"/>
</dbReference>
<dbReference type="GO" id="GO:0003723">
    <property type="term" value="F:RNA binding"/>
    <property type="evidence" value="ECO:0007669"/>
    <property type="project" value="UniProtKB-KW"/>
</dbReference>
<dbReference type="GO" id="GO:1990428">
    <property type="term" value="P:miRNA transport"/>
    <property type="evidence" value="ECO:0007669"/>
    <property type="project" value="TreeGrafter"/>
</dbReference>
<dbReference type="Gene3D" id="3.30.70.330">
    <property type="match status" value="1"/>
</dbReference>
<dbReference type="InterPro" id="IPR012677">
    <property type="entry name" value="Nucleotide-bd_a/b_plait_sf"/>
</dbReference>
<dbReference type="InterPro" id="IPR035979">
    <property type="entry name" value="RBD_domain_sf"/>
</dbReference>
<dbReference type="InterPro" id="IPR050886">
    <property type="entry name" value="RNA-binding_reg"/>
</dbReference>
<dbReference type="InterPro" id="IPR000504">
    <property type="entry name" value="RRM_dom"/>
</dbReference>
<dbReference type="PANTHER" id="PTHR48024">
    <property type="entry name" value="GEO13361P1-RELATED"/>
    <property type="match status" value="1"/>
</dbReference>
<dbReference type="PANTHER" id="PTHR48024:SF56">
    <property type="entry name" value="HETEROGENEOUS NUCLEAR RIBONUCLEOPROTEIN A0"/>
    <property type="match status" value="1"/>
</dbReference>
<dbReference type="Pfam" id="PF00076">
    <property type="entry name" value="RRM_1"/>
    <property type="match status" value="1"/>
</dbReference>
<dbReference type="SUPFAM" id="SSF54928">
    <property type="entry name" value="RNA-binding domain, RBD"/>
    <property type="match status" value="1"/>
</dbReference>
<protein>
    <recommendedName>
        <fullName>Glycine-rich RNA-binding protein 2</fullName>
    </recommendedName>
</protein>
<evidence type="ECO:0000269" key="1">
    <source ref="1"/>
</evidence>
<evidence type="ECO:0000303" key="2">
    <source ref="1"/>
</evidence>
<evidence type="ECO:0000305" key="3"/>
<keyword id="KW-0903">Direct protein sequencing</keyword>
<keyword id="KW-1185">Reference proteome</keyword>
<keyword id="KW-0694">RNA-binding</keyword>
<name>GRP2_POPEU</name>
<accession>P84976</accession>
<organism>
    <name type="scientific">Populus euphratica</name>
    <name type="common">Euphrates poplar</name>
    <dbReference type="NCBI Taxonomy" id="75702"/>
    <lineage>
        <taxon>Eukaryota</taxon>
        <taxon>Viridiplantae</taxon>
        <taxon>Streptophyta</taxon>
        <taxon>Embryophyta</taxon>
        <taxon>Tracheophyta</taxon>
        <taxon>Spermatophyta</taxon>
        <taxon>Magnoliopsida</taxon>
        <taxon>eudicotyledons</taxon>
        <taxon>Gunneridae</taxon>
        <taxon>Pentapetalae</taxon>
        <taxon>rosids</taxon>
        <taxon>fabids</taxon>
        <taxon>Malpighiales</taxon>
        <taxon>Salicaceae</taxon>
        <taxon>Saliceae</taxon>
        <taxon>Populus</taxon>
    </lineage>
</organism>
<proteinExistence type="evidence at protein level"/>
<sequence length="48" mass="5472">GIINDRETGRSRGFGFVTFNNEKGFGFVTFNNEKGFGFVTFNNEKSMR</sequence>
<reference evidence="3" key="1">
    <citation type="thesis" date="2006" institute="ICAT-FCUL" country="Portugal">
        <title>Molecular analysis of Populus euphratica Oliv. response to moderate heat stress.</title>
        <authorList>
            <person name="Ferreira S."/>
        </authorList>
    </citation>
    <scope>PROTEIN SEQUENCE</scope>
    <source>
        <tissue evidence="1">Leaf</tissue>
    </source>
</reference>
<comment type="caution">
    <text evidence="1">The order of the peptides shown is unknown.</text>
</comment>
<feature type="chain" id="PRO_0000305587" description="Glycine-rich RNA-binding protein 2">
    <location>
        <begin position="1" status="less than"/>
        <end position="48" status="greater than"/>
    </location>
</feature>
<feature type="non-consecutive residues" evidence="2">
    <location>
        <begin position="10"/>
        <end position="11"/>
    </location>
</feature>
<feature type="non-consecutive residues" evidence="2">
    <location>
        <begin position="23"/>
        <end position="24"/>
    </location>
</feature>
<feature type="non-consecutive residues" evidence="2">
    <location>
        <begin position="34"/>
        <end position="35"/>
    </location>
</feature>
<feature type="non-terminal residue" evidence="2">
    <location>
        <position position="1"/>
    </location>
</feature>
<feature type="non-terminal residue" evidence="2">
    <location>
        <position position="48"/>
    </location>
</feature>